<keyword id="KW-0963">Cytoplasm</keyword>
<keyword id="KW-1185">Reference proteome</keyword>
<keyword id="KW-0690">Ribosome biogenesis</keyword>
<reference key="1">
    <citation type="journal article" date="2007" name="PLoS Genet.">
        <title>A tale of two oxidation states: bacterial colonization of arsenic-rich environments.</title>
        <authorList>
            <person name="Muller D."/>
            <person name="Medigue C."/>
            <person name="Koechler S."/>
            <person name="Barbe V."/>
            <person name="Barakat M."/>
            <person name="Talla E."/>
            <person name="Bonnefoy V."/>
            <person name="Krin E."/>
            <person name="Arsene-Ploetze F."/>
            <person name="Carapito C."/>
            <person name="Chandler M."/>
            <person name="Cournoyer B."/>
            <person name="Cruveiller S."/>
            <person name="Dossat C."/>
            <person name="Duval S."/>
            <person name="Heymann M."/>
            <person name="Leize E."/>
            <person name="Lieutaud A."/>
            <person name="Lievremont D."/>
            <person name="Makita Y."/>
            <person name="Mangenot S."/>
            <person name="Nitschke W."/>
            <person name="Ortet P."/>
            <person name="Perdrial N."/>
            <person name="Schoepp B."/>
            <person name="Siguier P."/>
            <person name="Simeonova D.D."/>
            <person name="Rouy Z."/>
            <person name="Segurens B."/>
            <person name="Turlin E."/>
            <person name="Vallenet D."/>
            <person name="van Dorsselaer A."/>
            <person name="Weiss S."/>
            <person name="Weissenbach J."/>
            <person name="Lett M.-C."/>
            <person name="Danchin A."/>
            <person name="Bertin P.N."/>
        </authorList>
    </citation>
    <scope>NUCLEOTIDE SEQUENCE [LARGE SCALE GENOMIC DNA]</scope>
    <source>
        <strain>ULPAs1</strain>
    </source>
</reference>
<name>RBFA_HERAR</name>
<proteinExistence type="inferred from homology"/>
<protein>
    <recommendedName>
        <fullName evidence="1">Ribosome-binding factor A</fullName>
    </recommendedName>
</protein>
<evidence type="ECO:0000255" key="1">
    <source>
        <dbReference type="HAMAP-Rule" id="MF_00003"/>
    </source>
</evidence>
<gene>
    <name evidence="1" type="primary">rbfA</name>
    <name type="ordered locus">HEAR2432</name>
</gene>
<dbReference type="EMBL" id="CU207211">
    <property type="protein sequence ID" value="CAL62563.1"/>
    <property type="molecule type" value="Genomic_DNA"/>
</dbReference>
<dbReference type="SMR" id="A4G7S6"/>
<dbReference type="STRING" id="204773.HEAR2432"/>
<dbReference type="KEGG" id="har:HEAR2432"/>
<dbReference type="eggNOG" id="COG0858">
    <property type="taxonomic scope" value="Bacteria"/>
</dbReference>
<dbReference type="HOGENOM" id="CLU_089475_5_1_4"/>
<dbReference type="OrthoDB" id="307788at2"/>
<dbReference type="Proteomes" id="UP000006697">
    <property type="component" value="Chromosome"/>
</dbReference>
<dbReference type="GO" id="GO:0005829">
    <property type="term" value="C:cytosol"/>
    <property type="evidence" value="ECO:0007669"/>
    <property type="project" value="TreeGrafter"/>
</dbReference>
<dbReference type="GO" id="GO:0043024">
    <property type="term" value="F:ribosomal small subunit binding"/>
    <property type="evidence" value="ECO:0007669"/>
    <property type="project" value="TreeGrafter"/>
</dbReference>
<dbReference type="GO" id="GO:0030490">
    <property type="term" value="P:maturation of SSU-rRNA"/>
    <property type="evidence" value="ECO:0007669"/>
    <property type="project" value="UniProtKB-UniRule"/>
</dbReference>
<dbReference type="Gene3D" id="3.30.300.20">
    <property type="match status" value="1"/>
</dbReference>
<dbReference type="HAMAP" id="MF_00003">
    <property type="entry name" value="RbfA"/>
    <property type="match status" value="1"/>
</dbReference>
<dbReference type="InterPro" id="IPR015946">
    <property type="entry name" value="KH_dom-like_a/b"/>
</dbReference>
<dbReference type="InterPro" id="IPR000238">
    <property type="entry name" value="RbfA"/>
</dbReference>
<dbReference type="InterPro" id="IPR023799">
    <property type="entry name" value="RbfA_dom_sf"/>
</dbReference>
<dbReference type="NCBIfam" id="TIGR00082">
    <property type="entry name" value="rbfA"/>
    <property type="match status" value="1"/>
</dbReference>
<dbReference type="PANTHER" id="PTHR33515">
    <property type="entry name" value="RIBOSOME-BINDING FACTOR A, CHLOROPLASTIC-RELATED"/>
    <property type="match status" value="1"/>
</dbReference>
<dbReference type="PANTHER" id="PTHR33515:SF1">
    <property type="entry name" value="RIBOSOME-BINDING FACTOR A, CHLOROPLASTIC-RELATED"/>
    <property type="match status" value="1"/>
</dbReference>
<dbReference type="Pfam" id="PF02033">
    <property type="entry name" value="RBFA"/>
    <property type="match status" value="1"/>
</dbReference>
<dbReference type="SUPFAM" id="SSF89919">
    <property type="entry name" value="Ribosome-binding factor A, RbfA"/>
    <property type="match status" value="1"/>
</dbReference>
<feature type="chain" id="PRO_0000321223" description="Ribosome-binding factor A">
    <location>
        <begin position="1"/>
        <end position="128"/>
    </location>
</feature>
<organism>
    <name type="scientific">Herminiimonas arsenicoxydans</name>
    <dbReference type="NCBI Taxonomy" id="204773"/>
    <lineage>
        <taxon>Bacteria</taxon>
        <taxon>Pseudomonadati</taxon>
        <taxon>Pseudomonadota</taxon>
        <taxon>Betaproteobacteria</taxon>
        <taxon>Burkholderiales</taxon>
        <taxon>Oxalobacteraceae</taxon>
        <taxon>Herminiimonas</taxon>
    </lineage>
</organism>
<accession>A4G7S6</accession>
<sequence length="128" mass="14148">MAKHSKSIPGRGLRVADQIQRDLSEIVAFELKDPRVGMITITEVQVTPDYAHAKVFFTMLSDNKDEIKNTVSGLSAASGYIRGQLGRRLSIHTLPELHFVHDTSTARGIEMSKLIDEANATRAKDAED</sequence>
<comment type="function">
    <text evidence="1">One of several proteins that assist in the late maturation steps of the functional core of the 30S ribosomal subunit. Associates with free 30S ribosomal subunits (but not with 30S subunits that are part of 70S ribosomes or polysomes). Required for efficient processing of 16S rRNA. May interact with the 5'-terminal helix region of 16S rRNA.</text>
</comment>
<comment type="subunit">
    <text evidence="1">Monomer. Binds 30S ribosomal subunits, but not 50S ribosomal subunits or 70S ribosomes.</text>
</comment>
<comment type="subcellular location">
    <subcellularLocation>
        <location evidence="1">Cytoplasm</location>
    </subcellularLocation>
</comment>
<comment type="similarity">
    <text evidence="1">Belongs to the RbfA family.</text>
</comment>